<reference key="1">
    <citation type="journal article" date="1994" name="J. Biol. Chem.">
        <title>Atpk1, a novel ribosomal protein kinase gene from Arabidopsis. I. Isolation, characterization, and expression.</title>
        <authorList>
            <person name="Zhang S.-H."/>
            <person name="Lawton M.A."/>
            <person name="Hunter T."/>
            <person name="Lamb C.J."/>
        </authorList>
    </citation>
    <scope>NUCLEOTIDE SEQUENCE [MRNA]</scope>
    <source>
        <strain>cv. Landsberg erecta</strain>
    </source>
</reference>
<reference key="2">
    <citation type="journal article" date="1995" name="FEBS Lett.">
        <title>Two genes that encode ribosomal-protein S6 kinase homologs are induced by cold or salinity stress in Arabidopsis thaliana.</title>
        <authorList>
            <person name="Mizoguchi T."/>
            <person name="Hayashida N."/>
            <person name="Yamaguchi-Shinozaki K."/>
            <person name="Kamada H."/>
            <person name="Shinozaki K."/>
        </authorList>
    </citation>
    <scope>NUCLEOTIDE SEQUENCE [MRNA]</scope>
    <source>
        <strain>cv. Columbia</strain>
    </source>
</reference>
<reference key="3">
    <citation type="journal article" date="2000" name="Nature">
        <title>Sequence and analysis of chromosome 3 of the plant Arabidopsis thaliana.</title>
        <authorList>
            <person name="Salanoubat M."/>
            <person name="Lemcke K."/>
            <person name="Rieger M."/>
            <person name="Ansorge W."/>
            <person name="Unseld M."/>
            <person name="Fartmann B."/>
            <person name="Valle G."/>
            <person name="Bloecker H."/>
            <person name="Perez-Alonso M."/>
            <person name="Obermaier B."/>
            <person name="Delseny M."/>
            <person name="Boutry M."/>
            <person name="Grivell L.A."/>
            <person name="Mache R."/>
            <person name="Puigdomenech P."/>
            <person name="De Simone V."/>
            <person name="Choisne N."/>
            <person name="Artiguenave F."/>
            <person name="Robert C."/>
            <person name="Brottier P."/>
            <person name="Wincker P."/>
            <person name="Cattolico L."/>
            <person name="Weissenbach J."/>
            <person name="Saurin W."/>
            <person name="Quetier F."/>
            <person name="Schaefer M."/>
            <person name="Mueller-Auer S."/>
            <person name="Gabel C."/>
            <person name="Fuchs M."/>
            <person name="Benes V."/>
            <person name="Wurmbach E."/>
            <person name="Drzonek H."/>
            <person name="Erfle H."/>
            <person name="Jordan N."/>
            <person name="Bangert S."/>
            <person name="Wiedelmann R."/>
            <person name="Kranz H."/>
            <person name="Voss H."/>
            <person name="Holland R."/>
            <person name="Brandt P."/>
            <person name="Nyakatura G."/>
            <person name="Vezzi A."/>
            <person name="D'Angelo M."/>
            <person name="Pallavicini A."/>
            <person name="Toppo S."/>
            <person name="Simionati B."/>
            <person name="Conrad A."/>
            <person name="Hornischer K."/>
            <person name="Kauer G."/>
            <person name="Loehnert T.-H."/>
            <person name="Nordsiek G."/>
            <person name="Reichelt J."/>
            <person name="Scharfe M."/>
            <person name="Schoen O."/>
            <person name="Bargues M."/>
            <person name="Terol J."/>
            <person name="Climent J."/>
            <person name="Navarro P."/>
            <person name="Collado C."/>
            <person name="Perez-Perez A."/>
            <person name="Ottenwaelder B."/>
            <person name="Duchemin D."/>
            <person name="Cooke R."/>
            <person name="Laudie M."/>
            <person name="Berger-Llauro C."/>
            <person name="Purnelle B."/>
            <person name="Masuy D."/>
            <person name="de Haan M."/>
            <person name="Maarse A.C."/>
            <person name="Alcaraz J.-P."/>
            <person name="Cottet A."/>
            <person name="Casacuberta E."/>
            <person name="Monfort A."/>
            <person name="Argiriou A."/>
            <person name="Flores M."/>
            <person name="Liguori R."/>
            <person name="Vitale D."/>
            <person name="Mannhaupt G."/>
            <person name="Haase D."/>
            <person name="Schoof H."/>
            <person name="Rudd S."/>
            <person name="Zaccaria P."/>
            <person name="Mewes H.-W."/>
            <person name="Mayer K.F.X."/>
            <person name="Kaul S."/>
            <person name="Town C.D."/>
            <person name="Koo H.L."/>
            <person name="Tallon L.J."/>
            <person name="Jenkins J."/>
            <person name="Rooney T."/>
            <person name="Rizzo M."/>
            <person name="Walts A."/>
            <person name="Utterback T."/>
            <person name="Fujii C.Y."/>
            <person name="Shea T.P."/>
            <person name="Creasy T.H."/>
            <person name="Haas B."/>
            <person name="Maiti R."/>
            <person name="Wu D."/>
            <person name="Peterson J."/>
            <person name="Van Aken S."/>
            <person name="Pai G."/>
            <person name="Militscher J."/>
            <person name="Sellers P."/>
            <person name="Gill J.E."/>
            <person name="Feldblyum T.V."/>
            <person name="Preuss D."/>
            <person name="Lin X."/>
            <person name="Nierman W.C."/>
            <person name="Salzberg S.L."/>
            <person name="White O."/>
            <person name="Venter J.C."/>
            <person name="Fraser C.M."/>
            <person name="Kaneko T."/>
            <person name="Nakamura Y."/>
            <person name="Sato S."/>
            <person name="Kato T."/>
            <person name="Asamizu E."/>
            <person name="Sasamoto S."/>
            <person name="Kimura T."/>
            <person name="Idesawa K."/>
            <person name="Kawashima K."/>
            <person name="Kishida Y."/>
            <person name="Kiyokawa C."/>
            <person name="Kohara M."/>
            <person name="Matsumoto M."/>
            <person name="Matsuno A."/>
            <person name="Muraki A."/>
            <person name="Nakayama S."/>
            <person name="Nakazaki N."/>
            <person name="Shinpo S."/>
            <person name="Takeuchi C."/>
            <person name="Wada T."/>
            <person name="Watanabe A."/>
            <person name="Yamada M."/>
            <person name="Yasuda M."/>
            <person name="Tabata S."/>
        </authorList>
    </citation>
    <scope>NUCLEOTIDE SEQUENCE [LARGE SCALE GENOMIC DNA]</scope>
    <source>
        <strain>cv. Columbia</strain>
    </source>
</reference>
<reference key="4">
    <citation type="journal article" date="2017" name="Plant J.">
        <title>Araport11: a complete reannotation of the Arabidopsis thaliana reference genome.</title>
        <authorList>
            <person name="Cheng C.Y."/>
            <person name="Krishnakumar V."/>
            <person name="Chan A.P."/>
            <person name="Thibaud-Nissen F."/>
            <person name="Schobel S."/>
            <person name="Town C.D."/>
        </authorList>
    </citation>
    <scope>GENOME REANNOTATION</scope>
    <source>
        <strain>cv. Columbia</strain>
    </source>
</reference>
<reference key="5">
    <citation type="journal article" date="2003" name="Science">
        <title>Empirical analysis of transcriptional activity in the Arabidopsis genome.</title>
        <authorList>
            <person name="Yamada K."/>
            <person name="Lim J."/>
            <person name="Dale J.M."/>
            <person name="Chen H."/>
            <person name="Shinn P."/>
            <person name="Palm C.J."/>
            <person name="Southwick A.M."/>
            <person name="Wu H.C."/>
            <person name="Kim C.J."/>
            <person name="Nguyen M."/>
            <person name="Pham P.K."/>
            <person name="Cheuk R.F."/>
            <person name="Karlin-Newmann G."/>
            <person name="Liu S.X."/>
            <person name="Lam B."/>
            <person name="Sakano H."/>
            <person name="Wu T."/>
            <person name="Yu G."/>
            <person name="Miranda M."/>
            <person name="Quach H.L."/>
            <person name="Tripp M."/>
            <person name="Chang C.H."/>
            <person name="Lee J.M."/>
            <person name="Toriumi M.J."/>
            <person name="Chan M.M."/>
            <person name="Tang C.C."/>
            <person name="Onodera C.S."/>
            <person name="Deng J.M."/>
            <person name="Akiyama K."/>
            <person name="Ansari Y."/>
            <person name="Arakawa T."/>
            <person name="Banh J."/>
            <person name="Banno F."/>
            <person name="Bowser L."/>
            <person name="Brooks S.Y."/>
            <person name="Carninci P."/>
            <person name="Chao Q."/>
            <person name="Choy N."/>
            <person name="Enju A."/>
            <person name="Goldsmith A.D."/>
            <person name="Gurjal M."/>
            <person name="Hansen N.F."/>
            <person name="Hayashizaki Y."/>
            <person name="Johnson-Hopson C."/>
            <person name="Hsuan V.W."/>
            <person name="Iida K."/>
            <person name="Karnes M."/>
            <person name="Khan S."/>
            <person name="Koesema E."/>
            <person name="Ishida J."/>
            <person name="Jiang P.X."/>
            <person name="Jones T."/>
            <person name="Kawai J."/>
            <person name="Kamiya A."/>
            <person name="Meyers C."/>
            <person name="Nakajima M."/>
            <person name="Narusaka M."/>
            <person name="Seki M."/>
            <person name="Sakurai T."/>
            <person name="Satou M."/>
            <person name="Tamse R."/>
            <person name="Vaysberg M."/>
            <person name="Wallender E.K."/>
            <person name="Wong C."/>
            <person name="Yamamura Y."/>
            <person name="Yuan S."/>
            <person name="Shinozaki K."/>
            <person name="Davis R.W."/>
            <person name="Theologis A."/>
            <person name="Ecker J.R."/>
        </authorList>
    </citation>
    <scope>NUCLEOTIDE SEQUENCE [LARGE SCALE MRNA]</scope>
    <source>
        <strain>cv. Columbia</strain>
    </source>
</reference>
<reference key="6">
    <citation type="submission" date="2002-03" db="EMBL/GenBank/DDBJ databases">
        <title>Full-length cDNA from Arabidopsis thaliana.</title>
        <authorList>
            <person name="Brover V.V."/>
            <person name="Troukhan M.E."/>
            <person name="Alexandrov N.A."/>
            <person name="Lu Y.-P."/>
            <person name="Flavell R.B."/>
            <person name="Feldmann K.A."/>
        </authorList>
    </citation>
    <scope>NUCLEOTIDE SEQUENCE [LARGE SCALE MRNA]</scope>
</reference>
<reference key="7">
    <citation type="journal article" date="1994" name="J. Biol. Chem.">
        <title>Atpk1, a novel ribosomal protein kinase gene from Arabidopsis. II. Functional and biochemical analysis of the encoded protein.</title>
        <authorList>
            <person name="Zhang S.-H."/>
            <person name="Broome M.A."/>
            <person name="Lawton M.A."/>
            <person name="Hunter T."/>
            <person name="Lamb C.J."/>
        </authorList>
    </citation>
    <scope>CHARACTERIZATION</scope>
    <scope>MUTAGENESIS OF LYS-163</scope>
    <source>
        <strain>cv. Landsberg erecta</strain>
    </source>
</reference>
<reference key="8">
    <citation type="journal article" date="2003" name="Trends Plant Sci.">
        <title>Growth signalling pathways in Arabidopsis and the AGC protein kinases.</title>
        <authorList>
            <person name="Boegre L."/>
            <person name="Okresz L."/>
            <person name="Henriques R."/>
            <person name="Anthony R.G."/>
        </authorList>
    </citation>
    <scope>GENE FAMILY</scope>
    <scope>REVIEW</scope>
</reference>
<reference key="9">
    <citation type="journal article" date="2006" name="Plant Cell">
        <title>Arabidopsis TARGET OF RAPAMYCIN interacts with RAPTOR, which regulates the activity of S6 kinase in response to osmotic stress signals.</title>
        <authorList>
            <person name="Mahfouz M.M."/>
            <person name="Kim S."/>
            <person name="Delauney A.J."/>
            <person name="Verma D.P."/>
        </authorList>
    </citation>
    <scope>ACTIVITY REGULATION</scope>
    <scope>PHOSPHORYLATION AT SER-290 BY PDK1</scope>
    <scope>INTERACTION WITH RAPTOR1</scope>
</reference>
<reference key="10">
    <citation type="journal article" date="2010" name="EMBO J.">
        <title>Arabidopsis S6 kinase mutants display chromosome instability and altered RBR1-E2F pathway activity.</title>
        <authorList>
            <person name="Henriques R."/>
            <person name="Magyar Z."/>
            <person name="Monardes A."/>
            <person name="Khan S."/>
            <person name="Zalejski C."/>
            <person name="Orellana J."/>
            <person name="Szabados L."/>
            <person name="de la Torre C."/>
            <person name="Koncz C."/>
            <person name="Bogre L."/>
        </authorList>
    </citation>
    <scope>FUNCTION</scope>
    <scope>INTERACTION WITH RBR1-E2FB COMPLEX</scope>
    <scope>MUTAGENESIS OF CYS-94</scope>
    <scope>SUBCELLULAR LOCATION</scope>
</reference>
<reference key="11">
    <citation type="journal article" date="2012" name="J. Biol. Chem.">
        <title>Rapamycin and glucose-target of rapamycin (TOR) protein signaling in plants.</title>
        <authorList>
            <person name="Xiong Y."/>
            <person name="Sheen J."/>
        </authorList>
    </citation>
    <scope>PHOSPHORYLATION AT THR-449 BY TOR</scope>
</reference>
<reference key="12">
    <citation type="journal article" date="2015" name="J. Exp. Bot.">
        <title>Overexpression of the PP2A regulatory subunit Tap46 leads to enhanced plant growth through stimulation of the TOR signalling pathway.</title>
        <authorList>
            <person name="Ahn C.S."/>
            <person name="Ahn H.K."/>
            <person name="Pai H.S."/>
        </authorList>
    </citation>
    <scope>MUTAGENESIS OF THR-449</scope>
    <scope>INTERACTION WITH TAP46</scope>
</reference>
<reference key="13">
    <citation type="journal article" date="2017" name="Plant Cell">
        <title>MRF family genes are involved in translation control, especially under energy-deficient conditions, and their expression and functions are modulated by the TOR signaling pathway.</title>
        <authorList>
            <person name="Lee D.-H."/>
            <person name="Park S.J."/>
            <person name="Ahn C.S."/>
            <person name="Pai H.-S."/>
        </authorList>
    </citation>
    <scope>FUNCTION</scope>
    <scope>MUTAGENESIS OF THR-449</scope>
    <scope>INTERACTION WITH MRF1</scope>
    <source>
        <strain>cv. Columbia</strain>
    </source>
</reference>
<accession>P42818</accession>
<accession>Q8LFC1</accession>
<evidence type="ECO:0000250" key="1"/>
<evidence type="ECO:0000255" key="2">
    <source>
        <dbReference type="PROSITE-ProRule" id="PRU00159"/>
    </source>
</evidence>
<evidence type="ECO:0000255" key="3">
    <source>
        <dbReference type="PROSITE-ProRule" id="PRU00618"/>
    </source>
</evidence>
<evidence type="ECO:0000255" key="4">
    <source>
        <dbReference type="PROSITE-ProRule" id="PRU10027"/>
    </source>
</evidence>
<evidence type="ECO:0000269" key="5">
    <source>
    </source>
</evidence>
<evidence type="ECO:0000269" key="6">
    <source>
    </source>
</evidence>
<evidence type="ECO:0000269" key="7">
    <source>
    </source>
</evidence>
<evidence type="ECO:0000269" key="8">
    <source>
    </source>
</evidence>
<evidence type="ECO:0000269" key="9">
    <source>
    </source>
</evidence>
<evidence type="ECO:0000269" key="10">
    <source>
    </source>
</evidence>
<evidence type="ECO:0000303" key="11">
    <source>
    </source>
</evidence>
<evidence type="ECO:0000303" key="12">
    <source>
    </source>
</evidence>
<evidence type="ECO:0000305" key="13"/>
<evidence type="ECO:0000305" key="14">
    <source>
    </source>
</evidence>
<evidence type="ECO:0000312" key="15">
    <source>
        <dbReference type="Araport" id="AT3G08730"/>
    </source>
</evidence>
<evidence type="ECO:0000312" key="16">
    <source>
        <dbReference type="EMBL" id="AAG51351.1"/>
    </source>
</evidence>
<feature type="chain" id="PRO_0000086163" description="Serine/threonine-protein kinase AtPK1/AtPK6">
    <location>
        <begin position="1"/>
        <end position="465"/>
    </location>
</feature>
<feature type="domain" description="Protein kinase" evidence="2">
    <location>
        <begin position="134"/>
        <end position="389"/>
    </location>
</feature>
<feature type="domain" description="AGC-kinase C-terminal" evidence="3">
    <location>
        <begin position="390"/>
        <end position="460"/>
    </location>
</feature>
<feature type="region of interest" description="Activation loop" evidence="1">
    <location>
        <begin position="275"/>
        <end position="301"/>
    </location>
</feature>
<feature type="short sequence motif" description="LVxCxE motif" evidence="6">
    <location>
        <begin position="91"/>
        <end position="96"/>
    </location>
</feature>
<feature type="active site" description="Proton acceptor" evidence="2 4">
    <location>
        <position position="257"/>
    </location>
</feature>
<feature type="binding site" evidence="2">
    <location>
        <begin position="140"/>
        <end position="148"/>
    </location>
    <ligand>
        <name>ATP</name>
        <dbReference type="ChEBI" id="CHEBI:30616"/>
    </ligand>
</feature>
<feature type="binding site" evidence="2">
    <location>
        <position position="163"/>
    </location>
    <ligand>
        <name>ATP</name>
        <dbReference type="ChEBI" id="CHEBI:30616"/>
    </ligand>
</feature>
<feature type="modified residue" description="Phosphoserine; by PDPK1" evidence="14">
    <location>
        <position position="290"/>
    </location>
</feature>
<feature type="modified residue" description="Phosphothreonine; by TOR" evidence="7">
    <location>
        <position position="449"/>
    </location>
</feature>
<feature type="mutagenesis site" description="Binding to RBR1 substantially diminished." evidence="6">
    <original>C</original>
    <variation>R</variation>
    <location>
        <position position="94"/>
    </location>
</feature>
<feature type="mutagenesis site" description="Activity substantially diminished." evidence="10">
    <original>K</original>
    <variation>R</variation>
    <location>
        <position position="163"/>
    </location>
</feature>
<feature type="mutagenesis site" description="Abrogation of the phosphorylation. Reduced MRF1 phosphorylation activity." evidence="8 9">
    <original>T</original>
    <variation>A</variation>
    <location>
        <position position="449"/>
    </location>
</feature>
<feature type="mutagenesis site" description="Phosphomimetic. No impact MRF1 phosphorylation activity." evidence="9">
    <original>T</original>
    <variation>D</variation>
    <location>
        <position position="449"/>
    </location>
</feature>
<feature type="sequence conflict" description="In Ref. 6; AAM61496." evidence="13" ref="6">
    <original>D</original>
    <variation>N</variation>
    <location>
        <position position="232"/>
    </location>
</feature>
<proteinExistence type="evidence at protein level"/>
<protein>
    <recommendedName>
        <fullName evidence="12">Serine/threonine-protein kinase AtPK1/AtPK6</fullName>
        <ecNumber>2.7.11.1</ecNumber>
    </recommendedName>
    <alternativeName>
        <fullName evidence="11">Ribosomal-protein S6 kinase homolog 1</fullName>
    </alternativeName>
</protein>
<name>KPK1_ARATH</name>
<comment type="function">
    <text evidence="6 9">Downstream effector of TOR signaling pathway involved in osmotic stress response (PubMed:20683442). Could be involved in the control of plant growth and development (PubMed:20683442). Phosphorylates the ribosomal proteins P14, P16 and S6 (PubMed:20683442). Functions as a repressor of cell proliferation and required for maintenance of chromosome stability and ploidy levels through the RBR1-E2F pathway (PubMed:20683442). Mediates the phosphorylation of MRFs (e.g. MRF1) (PubMed:29084871).</text>
</comment>
<comment type="catalytic activity">
    <reaction>
        <text>L-seryl-[protein] + ATP = O-phospho-L-seryl-[protein] + ADP + H(+)</text>
        <dbReference type="Rhea" id="RHEA:17989"/>
        <dbReference type="Rhea" id="RHEA-COMP:9863"/>
        <dbReference type="Rhea" id="RHEA-COMP:11604"/>
        <dbReference type="ChEBI" id="CHEBI:15378"/>
        <dbReference type="ChEBI" id="CHEBI:29999"/>
        <dbReference type="ChEBI" id="CHEBI:30616"/>
        <dbReference type="ChEBI" id="CHEBI:83421"/>
        <dbReference type="ChEBI" id="CHEBI:456216"/>
        <dbReference type="EC" id="2.7.11.1"/>
    </reaction>
</comment>
<comment type="catalytic activity">
    <reaction>
        <text>L-threonyl-[protein] + ATP = O-phospho-L-threonyl-[protein] + ADP + H(+)</text>
        <dbReference type="Rhea" id="RHEA:46608"/>
        <dbReference type="Rhea" id="RHEA-COMP:11060"/>
        <dbReference type="Rhea" id="RHEA-COMP:11605"/>
        <dbReference type="ChEBI" id="CHEBI:15378"/>
        <dbReference type="ChEBI" id="CHEBI:30013"/>
        <dbReference type="ChEBI" id="CHEBI:30616"/>
        <dbReference type="ChEBI" id="CHEBI:61977"/>
        <dbReference type="ChEBI" id="CHEBI:456216"/>
        <dbReference type="EC" id="2.7.11.1"/>
    </reaction>
</comment>
<comment type="activity regulation">
    <text evidence="5">Activated by PDK1. Repressed during osmotic stress.</text>
</comment>
<comment type="subunit">
    <text evidence="5 6 8 9">Interacts with RAPTOR1 (PubMed:16377759). Interacts with RBR1-E2FB complex through its LVxCxE motif (PubMed:20683442). Interacts with TAP46 (PubMed:25399018). Binds to MRF1 (PubMed:29084871).</text>
</comment>
<comment type="interaction">
    <interactant intactId="EBI-8107038">
        <id>P42818</id>
    </interactant>
    <interactant intactId="EBI-1774719">
        <id>Q9FV71</id>
        <label>E2FB</label>
    </interactant>
    <organismsDiffer>false</organismsDiffer>
    <experiments>3</experiments>
</comment>
<comment type="interaction">
    <interactant intactId="EBI-8107038">
        <id>P42818</id>
    </interactant>
    <interactant intactId="EBI-398590">
        <id>Q9LKZ3</id>
        <label>RBR1</label>
    </interactant>
    <organismsDiffer>false</organismsDiffer>
    <experiments>2</experiments>
</comment>
<comment type="interaction">
    <interactant intactId="EBI-8107038">
        <id>P42818</id>
    </interactant>
    <interactant intactId="EBI-1635551">
        <id>O49160</id>
        <label>TIF3C1</label>
    </interactant>
    <organismsDiffer>false</organismsDiffer>
    <experiments>2</experiments>
</comment>
<comment type="interaction">
    <interactant intactId="EBI-8107038">
        <id>P42818</id>
    </interactant>
    <interactant intactId="EBI-3387106">
        <id>Q9C5Z2</id>
        <label>TIF3H1</label>
    </interactant>
    <organismsDiffer>false</organismsDiffer>
    <experiments>3</experiments>
</comment>
<comment type="subcellular location">
    <subcellularLocation>
        <location evidence="6">Cytoplasm</location>
    </subcellularLocation>
    <subcellularLocation>
        <location evidence="6">Nucleus</location>
    </subcellularLocation>
</comment>
<comment type="tissue specificity">
    <text>Expressed in all tissues.</text>
</comment>
<comment type="developmental stage">
    <text>Predominates during high metabolic activity in growing buds, root tips, leaf margins and germinating seeds.</text>
</comment>
<comment type="domain">
    <text evidence="1">The activation loop within the kinase domain is the target of phosphorylation.</text>
</comment>
<comment type="PTM">
    <text evidence="5 7">Undergoes serine-specific autophosphorylation. Phosphorylated at Thr-449 by TOR.</text>
</comment>
<comment type="miscellaneous">
    <text>Plants overexpressing KPK1 are hypersensitive to osmotic stress.</text>
</comment>
<comment type="similarity">
    <text evidence="13">Belongs to the protein kinase superfamily. AGC Ser/Thr protein kinase family. S6 kinase subfamily.</text>
</comment>
<organism>
    <name type="scientific">Arabidopsis thaliana</name>
    <name type="common">Mouse-ear cress</name>
    <dbReference type="NCBI Taxonomy" id="3702"/>
    <lineage>
        <taxon>Eukaryota</taxon>
        <taxon>Viridiplantae</taxon>
        <taxon>Streptophyta</taxon>
        <taxon>Embryophyta</taxon>
        <taxon>Tracheophyta</taxon>
        <taxon>Spermatophyta</taxon>
        <taxon>Magnoliopsida</taxon>
        <taxon>eudicotyledons</taxon>
        <taxon>Gunneridae</taxon>
        <taxon>Pentapetalae</taxon>
        <taxon>rosids</taxon>
        <taxon>malvids</taxon>
        <taxon>Brassicales</taxon>
        <taxon>Brassicaceae</taxon>
        <taxon>Camelineae</taxon>
        <taxon>Arabidopsis</taxon>
    </lineage>
</organism>
<keyword id="KW-0067">ATP-binding</keyword>
<keyword id="KW-0963">Cytoplasm</keyword>
<keyword id="KW-0418">Kinase</keyword>
<keyword id="KW-0547">Nucleotide-binding</keyword>
<keyword id="KW-0539">Nucleus</keyword>
<keyword id="KW-0597">Phosphoprotein</keyword>
<keyword id="KW-1185">Reference proteome</keyword>
<keyword id="KW-0723">Serine/threonine-protein kinase</keyword>
<keyword id="KW-0808">Transferase</keyword>
<gene>
    <name evidence="12" type="primary">ATPK1</name>
    <name type="synonym">ATPK6</name>
    <name evidence="11" type="synonym">S6K1</name>
    <name evidence="15" type="ordered locus">At3g08730</name>
    <name evidence="16" type="ORF">F17O14.20</name>
</gene>
<dbReference type="EC" id="2.7.11.1"/>
<dbReference type="EMBL" id="L29030">
    <property type="protein sequence ID" value="AAA21142.1"/>
    <property type="molecule type" value="mRNA"/>
</dbReference>
<dbReference type="EMBL" id="D42056">
    <property type="protein sequence ID" value="BAA07656.1"/>
    <property type="molecule type" value="mRNA"/>
</dbReference>
<dbReference type="EMBL" id="AC012562">
    <property type="protein sequence ID" value="AAG51351.1"/>
    <property type="molecule type" value="Genomic_DNA"/>
</dbReference>
<dbReference type="EMBL" id="CP002686">
    <property type="protein sequence ID" value="AEE74671.1"/>
    <property type="molecule type" value="Genomic_DNA"/>
</dbReference>
<dbReference type="EMBL" id="CP002686">
    <property type="protein sequence ID" value="ANM64030.1"/>
    <property type="molecule type" value="Genomic_DNA"/>
</dbReference>
<dbReference type="EMBL" id="AY065230">
    <property type="protein sequence ID" value="AAL38706.1"/>
    <property type="molecule type" value="mRNA"/>
</dbReference>
<dbReference type="EMBL" id="AY096555">
    <property type="protein sequence ID" value="AAM20205.1"/>
    <property type="molecule type" value="mRNA"/>
</dbReference>
<dbReference type="EMBL" id="AY084935">
    <property type="protein sequence ID" value="AAM61496.1"/>
    <property type="molecule type" value="mRNA"/>
</dbReference>
<dbReference type="PIR" id="S68462">
    <property type="entry name" value="S68462"/>
</dbReference>
<dbReference type="SMR" id="P42818"/>
<dbReference type="BioGRID" id="5355">
    <property type="interactions" value="12"/>
</dbReference>
<dbReference type="FunCoup" id="P42818">
    <property type="interactions" value="2887"/>
</dbReference>
<dbReference type="IntAct" id="P42818">
    <property type="interactions" value="14"/>
</dbReference>
<dbReference type="MINT" id="P42818"/>
<dbReference type="STRING" id="3702.P42818"/>
<dbReference type="iPTMnet" id="P42818"/>
<dbReference type="PaxDb" id="3702-AT3G08730.1"/>
<dbReference type="ProteomicsDB" id="238211"/>
<dbReference type="EnsemblPlants" id="AT3G08730.1">
    <property type="protein sequence ID" value="AT3G08730.1"/>
    <property type="gene ID" value="AT3G08730"/>
</dbReference>
<dbReference type="EnsemblPlants" id="AT3G08730.2">
    <property type="protein sequence ID" value="AT3G08730.2"/>
    <property type="gene ID" value="AT3G08730"/>
</dbReference>
<dbReference type="GeneID" id="820020"/>
<dbReference type="Gramene" id="AT3G08730.1">
    <property type="protein sequence ID" value="AT3G08730.1"/>
    <property type="gene ID" value="AT3G08730"/>
</dbReference>
<dbReference type="Gramene" id="AT3G08730.2">
    <property type="protein sequence ID" value="AT3G08730.2"/>
    <property type="gene ID" value="AT3G08730"/>
</dbReference>
<dbReference type="KEGG" id="ath:AT3G08730"/>
<dbReference type="Araport" id="AT3G08730"/>
<dbReference type="TAIR" id="AT3G08730">
    <property type="gene designation" value="PK1"/>
</dbReference>
<dbReference type="eggNOG" id="KOG0598">
    <property type="taxonomic scope" value="Eukaryota"/>
</dbReference>
<dbReference type="HOGENOM" id="CLU_000288_63_49_1"/>
<dbReference type="InParanoid" id="P42818"/>
<dbReference type="OMA" id="PRANGNI"/>
<dbReference type="OrthoDB" id="63267at2759"/>
<dbReference type="PhylomeDB" id="P42818"/>
<dbReference type="BRENDA" id="2.7.11.1">
    <property type="organism ID" value="399"/>
</dbReference>
<dbReference type="PRO" id="PR:P42818"/>
<dbReference type="Proteomes" id="UP000006548">
    <property type="component" value="Chromosome 3"/>
</dbReference>
<dbReference type="ExpressionAtlas" id="P42818">
    <property type="expression patterns" value="baseline and differential"/>
</dbReference>
<dbReference type="GO" id="GO:0005737">
    <property type="term" value="C:cytoplasm"/>
    <property type="evidence" value="ECO:0000314"/>
    <property type="project" value="UniProtKB"/>
</dbReference>
<dbReference type="GO" id="GO:0005634">
    <property type="term" value="C:nucleus"/>
    <property type="evidence" value="ECO:0000314"/>
    <property type="project" value="UniProtKB"/>
</dbReference>
<dbReference type="GO" id="GO:0005524">
    <property type="term" value="F:ATP binding"/>
    <property type="evidence" value="ECO:0007669"/>
    <property type="project" value="UniProtKB-KW"/>
</dbReference>
<dbReference type="GO" id="GO:0016301">
    <property type="term" value="F:kinase activity"/>
    <property type="evidence" value="ECO:0000314"/>
    <property type="project" value="TAIR"/>
</dbReference>
<dbReference type="GO" id="GO:0004672">
    <property type="term" value="F:protein kinase activity"/>
    <property type="evidence" value="ECO:0000250"/>
    <property type="project" value="TAIR"/>
</dbReference>
<dbReference type="GO" id="GO:0106310">
    <property type="term" value="F:protein serine kinase activity"/>
    <property type="evidence" value="ECO:0007669"/>
    <property type="project" value="RHEA"/>
</dbReference>
<dbReference type="GO" id="GO:0004674">
    <property type="term" value="F:protein serine/threonine kinase activity"/>
    <property type="evidence" value="ECO:0000314"/>
    <property type="project" value="TAIR"/>
</dbReference>
<dbReference type="GO" id="GO:0008285">
    <property type="term" value="P:negative regulation of cell population proliferation"/>
    <property type="evidence" value="ECO:0000315"/>
    <property type="project" value="UniProtKB"/>
</dbReference>
<dbReference type="GO" id="GO:0045727">
    <property type="term" value="P:positive regulation of translation"/>
    <property type="evidence" value="ECO:0000304"/>
    <property type="project" value="TAIR"/>
</dbReference>
<dbReference type="GO" id="GO:0006468">
    <property type="term" value="P:protein phosphorylation"/>
    <property type="evidence" value="ECO:0000314"/>
    <property type="project" value="TAIR"/>
</dbReference>
<dbReference type="GO" id="GO:0009409">
    <property type="term" value="P:response to cold"/>
    <property type="evidence" value="ECO:0000270"/>
    <property type="project" value="TAIR"/>
</dbReference>
<dbReference type="GO" id="GO:0006970">
    <property type="term" value="P:response to osmotic stress"/>
    <property type="evidence" value="ECO:0000314"/>
    <property type="project" value="TAIR"/>
</dbReference>
<dbReference type="GO" id="GO:0009651">
    <property type="term" value="P:response to salt stress"/>
    <property type="evidence" value="ECO:0000270"/>
    <property type="project" value="TAIR"/>
</dbReference>
<dbReference type="CDD" id="cd05123">
    <property type="entry name" value="STKc_AGC"/>
    <property type="match status" value="1"/>
</dbReference>
<dbReference type="FunFam" id="1.10.510.10:FF:000297">
    <property type="entry name" value="Non-specific serine/threonine protein kinase"/>
    <property type="match status" value="1"/>
</dbReference>
<dbReference type="FunFam" id="3.30.200.20:FF:000048">
    <property type="entry name" value="Non-specific serine/threonine protein kinase"/>
    <property type="match status" value="1"/>
</dbReference>
<dbReference type="Gene3D" id="3.30.200.20">
    <property type="entry name" value="Phosphorylase Kinase, domain 1"/>
    <property type="match status" value="1"/>
</dbReference>
<dbReference type="Gene3D" id="1.10.510.10">
    <property type="entry name" value="Transferase(Phosphotransferase) domain 1"/>
    <property type="match status" value="1"/>
</dbReference>
<dbReference type="InterPro" id="IPR000961">
    <property type="entry name" value="AGC-kinase_C"/>
</dbReference>
<dbReference type="InterPro" id="IPR011009">
    <property type="entry name" value="Kinase-like_dom_sf"/>
</dbReference>
<dbReference type="InterPro" id="IPR017892">
    <property type="entry name" value="Pkinase_C"/>
</dbReference>
<dbReference type="InterPro" id="IPR000719">
    <property type="entry name" value="Prot_kinase_dom"/>
</dbReference>
<dbReference type="InterPro" id="IPR017441">
    <property type="entry name" value="Protein_kinase_ATP_BS"/>
</dbReference>
<dbReference type="InterPro" id="IPR008271">
    <property type="entry name" value="Ser/Thr_kinase_AS"/>
</dbReference>
<dbReference type="InterPro" id="IPR045270">
    <property type="entry name" value="STKc_AGC"/>
</dbReference>
<dbReference type="PANTHER" id="PTHR24351">
    <property type="entry name" value="RIBOSOMAL PROTEIN S6 KINASE"/>
    <property type="match status" value="1"/>
</dbReference>
<dbReference type="Pfam" id="PF00069">
    <property type="entry name" value="Pkinase"/>
    <property type="match status" value="1"/>
</dbReference>
<dbReference type="Pfam" id="PF00433">
    <property type="entry name" value="Pkinase_C"/>
    <property type="match status" value="1"/>
</dbReference>
<dbReference type="SMART" id="SM00133">
    <property type="entry name" value="S_TK_X"/>
    <property type="match status" value="1"/>
</dbReference>
<dbReference type="SMART" id="SM00220">
    <property type="entry name" value="S_TKc"/>
    <property type="match status" value="1"/>
</dbReference>
<dbReference type="SUPFAM" id="SSF56112">
    <property type="entry name" value="Protein kinase-like (PK-like)"/>
    <property type="match status" value="1"/>
</dbReference>
<dbReference type="PROSITE" id="PS51285">
    <property type="entry name" value="AGC_KINASE_CTER"/>
    <property type="match status" value="1"/>
</dbReference>
<dbReference type="PROSITE" id="PS00107">
    <property type="entry name" value="PROTEIN_KINASE_ATP"/>
    <property type="match status" value="1"/>
</dbReference>
<dbReference type="PROSITE" id="PS50011">
    <property type="entry name" value="PROTEIN_KINASE_DOM"/>
    <property type="match status" value="1"/>
</dbReference>
<dbReference type="PROSITE" id="PS00108">
    <property type="entry name" value="PROTEIN_KINASE_ST"/>
    <property type="match status" value="1"/>
</dbReference>
<sequence>MVSSQRPVPNKIQKQQYLSISPSNSVLKDDVELEFSDVFGPLPEEANDIAYDEPAVVYSRSHSLVGPCSLDSHSLKLTKLTLLETEDSIDLVECLEGESLKENDDFSGNDDSDNEKALEGDLVKVSGVVGIDDFEVMKVVGKGAFGKVYQVRKKETSEIYAMKVMRKDHIMEKNHAEYMKAERDILTKIDHPFIVQLKYSFQTKYRLYLVLDFINGGHLFFQLYHQGLFREDLARVYTAEIVSAVSHLHEKGIMHRDLKPENILMDTDGHVMLTDFGLAKEFEENTRSNSMCGTTEYMAPEIVRGKGHDKAADWWSVGILLYEMLTGKPPFLGSKGKIQQKIVKDKIKLPQFLSNEAHAILKGLLQKEPERRLGSGLSGAEEIKQHKWFKGINWKKLEAREVMPSFKPEVSGRQCIANFDKCWTDMSVLDSPASSPSSDPKANPFTNFTYVRPPPSFLHQSTTTL</sequence>